<organism>
    <name type="scientific">Aspergillus niger</name>
    <dbReference type="NCBI Taxonomy" id="5061"/>
    <lineage>
        <taxon>Eukaryota</taxon>
        <taxon>Fungi</taxon>
        <taxon>Dikarya</taxon>
        <taxon>Ascomycota</taxon>
        <taxon>Pezizomycotina</taxon>
        <taxon>Eurotiomycetes</taxon>
        <taxon>Eurotiomycetidae</taxon>
        <taxon>Eurotiales</taxon>
        <taxon>Aspergillaceae</taxon>
        <taxon>Aspergillus</taxon>
        <taxon>Aspergillus subgen. Circumdati</taxon>
    </lineage>
</organism>
<feature type="signal peptide" evidence="1">
    <location>
        <begin position="1"/>
        <end position="16"/>
    </location>
</feature>
<feature type="chain" id="PRO_0000012338" description="Glucose oxidase">
    <location>
        <begin position="17"/>
        <end position="605"/>
    </location>
</feature>
<feature type="active site" description="Proton acceptor" evidence="38 50">
    <location>
        <position position="538"/>
    </location>
</feature>
<feature type="binding site" evidence="3 18 28 38 49 50 51 52 53 54">
    <location>
        <position position="51"/>
    </location>
    <ligand>
        <name>FAD</name>
        <dbReference type="ChEBI" id="CHEBI:57692"/>
    </ligand>
</feature>
<feature type="binding site" evidence="3 18 28 38 49 50 51 52">
    <location>
        <position position="52"/>
    </location>
    <ligand>
        <name>FAD</name>
        <dbReference type="ChEBI" id="CHEBI:57692"/>
    </ligand>
</feature>
<feature type="binding site" evidence="3 18 28 38 49 50 51 52 53 54">
    <location>
        <position position="72"/>
    </location>
    <ligand>
        <name>FAD</name>
        <dbReference type="ChEBI" id="CHEBI:57692"/>
    </ligand>
</feature>
<feature type="binding site" evidence="3 18 28 38 49 50 51 52 53 54">
    <location>
        <position position="125"/>
    </location>
    <ligand>
        <name>FAD</name>
        <dbReference type="ChEBI" id="CHEBI:57692"/>
    </ligand>
</feature>
<feature type="binding site" evidence="3 18 28 38 49 50 51 52 53 54">
    <location>
        <position position="129"/>
    </location>
    <ligand>
        <name>FAD</name>
        <dbReference type="ChEBI" id="CHEBI:57692"/>
    </ligand>
</feature>
<feature type="binding site" evidence="3 18 28 49 51 52 53 54">
    <location>
        <position position="130"/>
    </location>
    <ligand>
        <name>FAD</name>
        <dbReference type="ChEBI" id="CHEBI:57692"/>
    </ligand>
</feature>
<feature type="binding site" evidence="3 18 28 38 49 50 51 52 53 54">
    <location>
        <position position="132"/>
    </location>
    <ligand>
        <name>FAD</name>
        <dbReference type="ChEBI" id="CHEBI:57692"/>
    </ligand>
</feature>
<feature type="binding site" evidence="3 18 28 38 49 50 51 52 53 54">
    <location>
        <position position="272"/>
    </location>
    <ligand>
        <name>FAD</name>
        <dbReference type="ChEBI" id="CHEBI:57692"/>
    </ligand>
</feature>
<feature type="binding site" evidence="28 53 54">
    <location>
        <position position="559"/>
    </location>
    <ligand>
        <name>O2</name>
        <dbReference type="ChEBI" id="CHEBI:15379"/>
    </ligand>
</feature>
<feature type="binding site" evidence="28 53 54">
    <location>
        <position position="560"/>
    </location>
    <ligand>
        <name>O2</name>
        <dbReference type="ChEBI" id="CHEBI:15379"/>
    </ligand>
</feature>
<feature type="binding site" evidence="3 18 28 38 49 50 51 52 53 54">
    <location>
        <position position="571"/>
    </location>
    <ligand>
        <name>FAD</name>
        <dbReference type="ChEBI" id="CHEBI:57692"/>
    </ligand>
</feature>
<feature type="binding site" evidence="3 18 28 38 49 50 51 52 53 54">
    <location>
        <position position="583"/>
    </location>
    <ligand>
        <name>FAD</name>
        <dbReference type="ChEBI" id="CHEBI:57692"/>
    </ligand>
</feature>
<feature type="glycosylation site" description="N-linked (GlcNAc...) asparagine" evidence="2">
    <location>
        <position position="65"/>
    </location>
</feature>
<feature type="glycosylation site" description="N-linked (GlcNAc...) asparagine" evidence="2">
    <location>
        <position position="111"/>
    </location>
</feature>
<feature type="glycosylation site" description="N-linked (GlcNAc...) asparagine" evidence="2 3 18 28 38 49 50 51 52 53 54">
    <location>
        <position position="183"/>
    </location>
</feature>
<feature type="glycosylation site" description="N-linked (GlcNAc...) asparagine" evidence="2 28 50">
    <location>
        <position position="190"/>
    </location>
</feature>
<feature type="glycosylation site" description="N-linked (GlcNAc...) asparagine" evidence="2 28 54">
    <location>
        <position position="280"/>
    </location>
</feature>
<feature type="glycosylation site" description="N-linked (GlcNAc...) asparagine" evidence="2 3 18 28 38 49 50 51 52 53 54">
    <location>
        <position position="377"/>
    </location>
</feature>
<feature type="glycosylation site" description="N-linked (GlcNAc...) asparagine" evidence="2 3 18 28 38 49 50 51 52 53 54">
    <location>
        <position position="410"/>
    </location>
</feature>
<feature type="glycosylation site" description="N-linked (GlcNAc...) asparagine" evidence="2 54">
    <location>
        <position position="495"/>
    </location>
</feature>
<feature type="disulfide bond" evidence="3 18 28 38 49 50 51 52 53 54">
    <location>
        <begin position="186"/>
        <end position="228"/>
    </location>
</feature>
<feature type="mutagenesis site" description="Stabilizes the enzyme structure by the introduction of new hydrogen salt bridge interaction." evidence="31">
    <original>T</original>
    <variation>K</variation>
    <location>
        <position position="32"/>
    </location>
</feature>
<feature type="mutagenesis site" description="Fills the deeply buried cavity in the vicinity of the FAD binding site, making the binding state more stable and thus contributing to stability." evidence="31">
    <original>A</original>
    <variation>M</variation>
    <location>
        <position position="58"/>
    </location>
</feature>
<feature type="mutagenesis site" description="Increases significantly the enzyme's thermal stability by introducing a new salt bridge near the interphase of the dimeric protein structure; when associated with E-531." evidence="23">
    <original>Q</original>
    <variation>R</variation>
    <location>
        <position position="112"/>
    </location>
</feature>
<feature type="mutagenesis site" description="Stabilizes the enzyme structure by the introduction of new hydrogen salt bridge interaction." evidence="31">
    <original>N</original>
    <variation>K</variation>
    <location>
        <position position="157"/>
    </location>
</feature>
<feature type="mutagenesis site" description="Does not affect stability but causes a twofold increase of the enzyme's specific activity; when associated with E-591." evidence="23">
    <original>Q</original>
    <variation>R</variation>
    <location>
        <position position="164"/>
    </location>
</feature>
<feature type="mutagenesis site" description="Stabilizes the enzyme structure by the introduction of new hydrogen bonding." evidence="31">
    <original>R</original>
    <variation>N</variation>
    <location>
        <position position="167"/>
    </location>
</feature>
<feature type="mutagenesis site" description="Optimizes the charge-charge interactions at the surface of the protein 3D-structure." evidence="31">
    <original>G</original>
    <variation>S</variation>
    <location>
        <position position="296"/>
    </location>
</feature>
<feature type="mutagenesis site" description="Stabilizes the enzyme structure by the introduction of new hydrogen bonding." evidence="31">
    <original>T</original>
    <variation>R</variation>
    <location>
        <position position="298"/>
    </location>
</feature>
<feature type="mutagenesis site" description="Fills the deeply buried cavity in the vicinity of the FAD binding site, making the binding state more stable and thus contributing to stability." evidence="31">
    <original>A</original>
    <variation>M</variation>
    <location>
        <position position="314"/>
    </location>
</feature>
<feature type="mutagenesis site" description="Contributes to facilitate the inter-helix hydrophobic interaction." evidence="31">
    <original>L</original>
    <variation>Y</variation>
    <location>
        <position position="334"/>
    </location>
</feature>
<feature type="mutagenesis site" description="Stabilizes the enzyme structure by the introduction of new hydrogen bonding." evidence="31">
    <original>R</original>
    <variation>T</variation>
    <location>
        <position position="357"/>
    </location>
</feature>
<feature type="mutagenesis site" description="Causes entropic stabilization, in which a proline contributes to enzyme rigidity due to the lower degree of freedom of proline in the unfolded state." evidence="31">
    <original>S</original>
    <variation>P</variation>
    <location>
        <position position="362"/>
    </location>
</feature>
<feature type="mutagenesis site" description="Stabilizes the enzyme structure by the introduction of new hydrogen bonding." evidence="31">
    <original>H</original>
    <variation>Q</variation>
    <location>
        <position position="388"/>
    </location>
</feature>
<feature type="mutagenesis site" description="Stabilizes the enzyme structure by the introduction of new hydrogen bonding." evidence="31">
    <original>E</original>
    <variation>Y</variation>
    <location>
        <position position="389"/>
    </location>
</feature>
<feature type="mutagenesis site" description="Optimizes the charge-charge interactions at the surface of the protein 3D-structure." evidence="31">
    <original>E</original>
    <variation>Q</variation>
    <location>
        <position position="396"/>
    </location>
</feature>
<feature type="mutagenesis site" description="Optimizes the charge-charge interactions at the surface of the protein 3D-structure." evidence="31">
    <original>V</original>
    <variation>G</variation>
    <location>
        <position position="442"/>
    </location>
</feature>
<feature type="mutagenesis site" description="Stabilizes the enzyme structure by the introduction of new hydrogen bonding." evidence="31">
    <original>S</original>
    <variation>N</variation>
    <location>
        <position position="444"/>
    </location>
</feature>
<feature type="mutagenesis site" description="Optimizes the charge-charge interactions at the surface of the protein 3D-structure." evidence="31">
    <original>D</original>
    <variation>N</variation>
    <location>
        <position position="473"/>
    </location>
</feature>
<feature type="mutagenesis site" description="Increases significantly the enzyme's thermal stability by introducing a new salt bridge near the interphase of the dimeric protein structure; when associated with R-112." evidence="23">
    <original>Y</original>
    <variation>E</variation>
    <location>
        <position position="531"/>
    </location>
</feature>
<feature type="mutagenesis site" description="Increases significantly the enzyme's thermal stability by generating a sulfur-pi interaction." evidence="23">
    <original>T</original>
    <variation>M</variation>
    <location>
        <position position="576"/>
    </location>
</feature>
<feature type="mutagenesis site" description="Does not affect stability but causes a twofold increase of the enzyme's specific activity; when associated with R-164." evidence="23">
    <original>L</original>
    <variation>E</variation>
    <location>
        <position position="591"/>
    </location>
</feature>
<feature type="helix" evidence="56">
    <location>
        <begin position="26"/>
        <end position="29"/>
    </location>
</feature>
<feature type="helix" evidence="56">
    <location>
        <begin position="34"/>
        <end position="36"/>
    </location>
</feature>
<feature type="turn" evidence="56">
    <location>
        <begin position="37"/>
        <end position="39"/>
    </location>
</feature>
<feature type="strand" evidence="56">
    <location>
        <begin position="41"/>
        <end position="47"/>
    </location>
</feature>
<feature type="helix" evidence="56">
    <location>
        <begin position="51"/>
        <end position="60"/>
    </location>
</feature>
<feature type="strand" evidence="56">
    <location>
        <begin position="68"/>
        <end position="71"/>
    </location>
</feature>
<feature type="helix" evidence="56">
    <location>
        <begin position="82"/>
        <end position="85"/>
    </location>
</feature>
<feature type="helix" evidence="56">
    <location>
        <begin position="87"/>
        <end position="89"/>
    </location>
</feature>
<feature type="turn" evidence="56">
    <location>
        <begin position="90"/>
        <end position="95"/>
    </location>
</feature>
<feature type="turn" evidence="56">
    <location>
        <begin position="108"/>
        <end position="110"/>
    </location>
</feature>
<feature type="helix" evidence="56">
    <location>
        <begin position="124"/>
        <end position="127"/>
    </location>
</feature>
<feature type="helix" evidence="56">
    <location>
        <begin position="138"/>
        <end position="146"/>
    </location>
</feature>
<feature type="helix" evidence="56">
    <location>
        <begin position="155"/>
        <end position="165"/>
    </location>
</feature>
<feature type="strand" evidence="56">
    <location>
        <begin position="166"/>
        <end position="168"/>
    </location>
</feature>
<feature type="helix" evidence="56">
    <location>
        <begin position="173"/>
        <end position="178"/>
    </location>
</feature>
<feature type="helix" evidence="56">
    <location>
        <begin position="184"/>
        <end position="186"/>
    </location>
</feature>
<feature type="strand" evidence="56">
    <location>
        <begin position="189"/>
        <end position="196"/>
    </location>
</feature>
<feature type="helix" evidence="56">
    <location>
        <begin position="207"/>
        <end position="216"/>
    </location>
</feature>
<feature type="turn" evidence="56">
    <location>
        <begin position="217"/>
        <end position="219"/>
    </location>
</feature>
<feature type="strand" evidence="56">
    <location>
        <begin position="233"/>
        <end position="235"/>
    </location>
</feature>
<feature type="strand" evidence="56">
    <location>
        <begin position="239"/>
        <end position="241"/>
    </location>
</feature>
<feature type="helix" evidence="56">
    <location>
        <begin position="250"/>
        <end position="254"/>
    </location>
</feature>
<feature type="turn" evidence="56">
    <location>
        <begin position="255"/>
        <end position="260"/>
    </location>
</feature>
<feature type="strand" evidence="56">
    <location>
        <begin position="264"/>
        <end position="267"/>
    </location>
</feature>
<feature type="strand" evidence="56">
    <location>
        <begin position="271"/>
        <end position="278"/>
    </location>
</feature>
<feature type="strand" evidence="56">
    <location>
        <begin position="280"/>
        <end position="283"/>
    </location>
</feature>
<feature type="strand" evidence="56">
    <location>
        <begin position="285"/>
        <end position="294"/>
    </location>
</feature>
<feature type="strand" evidence="56">
    <location>
        <begin position="298"/>
        <end position="309"/>
    </location>
</feature>
<feature type="turn" evidence="56">
    <location>
        <begin position="313"/>
        <end position="315"/>
    </location>
</feature>
<feature type="helix" evidence="56">
    <location>
        <begin position="316"/>
        <end position="322"/>
    </location>
</feature>
<feature type="helix" evidence="56">
    <location>
        <begin position="328"/>
        <end position="331"/>
    </location>
</feature>
<feature type="helix" evidence="56">
    <location>
        <begin position="332"/>
        <end position="334"/>
    </location>
</feature>
<feature type="strand" evidence="57">
    <location>
        <begin position="339"/>
        <end position="341"/>
    </location>
</feature>
<feature type="strand" evidence="57">
    <location>
        <begin position="346"/>
        <end position="349"/>
    </location>
</feature>
<feature type="strand" evidence="56">
    <location>
        <begin position="352"/>
        <end position="360"/>
    </location>
</feature>
<feature type="helix" evidence="56">
    <location>
        <begin position="362"/>
        <end position="364"/>
    </location>
</feature>
<feature type="strand" evidence="56">
    <location>
        <begin position="369"/>
        <end position="375"/>
    </location>
</feature>
<feature type="helix" evidence="56">
    <location>
        <begin position="376"/>
        <end position="380"/>
    </location>
</feature>
<feature type="helix" evidence="56">
    <location>
        <begin position="381"/>
        <end position="383"/>
    </location>
</feature>
<feature type="helix" evidence="56">
    <location>
        <begin position="384"/>
        <end position="393"/>
    </location>
</feature>
<feature type="helix" evidence="56">
    <location>
        <begin position="395"/>
        <end position="404"/>
    </location>
</feature>
<feature type="helix" evidence="56">
    <location>
        <begin position="411"/>
        <end position="427"/>
    </location>
</feature>
<feature type="strand" evidence="56">
    <location>
        <begin position="431"/>
        <end position="438"/>
    </location>
</feature>
<feature type="strand" evidence="56">
    <location>
        <begin position="442"/>
        <end position="451"/>
    </location>
</feature>
<feature type="strand" evidence="56">
    <location>
        <begin position="456"/>
        <end position="463"/>
    </location>
</feature>
<feature type="helix" evidence="56">
    <location>
        <begin position="465"/>
        <end position="467"/>
    </location>
</feature>
<feature type="strand" evidence="56">
    <location>
        <begin position="470"/>
        <end position="473"/>
    </location>
</feature>
<feature type="helix" evidence="56">
    <location>
        <begin position="480"/>
        <end position="497"/>
    </location>
</feature>
<feature type="helix" evidence="56">
    <location>
        <begin position="502"/>
        <end position="505"/>
    </location>
</feature>
<feature type="strand" evidence="56">
    <location>
        <begin position="506"/>
        <end position="512"/>
    </location>
</feature>
<feature type="helix" evidence="56">
    <location>
        <begin position="513"/>
        <end position="515"/>
    </location>
</feature>
<feature type="helix" evidence="56">
    <location>
        <begin position="522"/>
        <end position="528"/>
    </location>
</feature>
<feature type="helix" evidence="56">
    <location>
        <begin position="529"/>
        <end position="531"/>
    </location>
</feature>
<feature type="helix" evidence="56">
    <location>
        <begin position="548"/>
        <end position="550"/>
    </location>
</feature>
<feature type="strand" evidence="55">
    <location>
        <begin position="558"/>
        <end position="560"/>
    </location>
</feature>
<feature type="strand" evidence="56">
    <location>
        <begin position="564"/>
        <end position="568"/>
    </location>
</feature>
<feature type="helix" evidence="56">
    <location>
        <begin position="583"/>
        <end position="603"/>
    </location>
</feature>
<dbReference type="EC" id="1.1.3.4" evidence="9 10 11 19 20 24"/>
<dbReference type="EMBL" id="X16061">
    <property type="protein sequence ID" value="CAA34197.1"/>
    <property type="molecule type" value="Genomic_DNA"/>
</dbReference>
<dbReference type="EMBL" id="J05242">
    <property type="protein sequence ID" value="AAA32695.1"/>
    <property type="molecule type" value="mRNA"/>
</dbReference>
<dbReference type="EMBL" id="X56443">
    <property type="protein sequence ID" value="CAA39826.1"/>
    <property type="molecule type" value="Genomic_DNA"/>
</dbReference>
<dbReference type="PIR" id="A35459">
    <property type="entry name" value="A35459"/>
</dbReference>
<dbReference type="PDB" id="1CF3">
    <property type="method" value="X-ray"/>
    <property type="resolution" value="1.90 A"/>
    <property type="chains" value="A=23-605"/>
</dbReference>
<dbReference type="PDB" id="1GAL">
    <property type="method" value="X-ray"/>
    <property type="resolution" value="2.30 A"/>
    <property type="chains" value="A=23-605"/>
</dbReference>
<dbReference type="PDB" id="3QVP">
    <property type="method" value="X-ray"/>
    <property type="resolution" value="1.20 A"/>
    <property type="chains" value="A=23-605"/>
</dbReference>
<dbReference type="PDB" id="3QVR">
    <property type="method" value="X-ray"/>
    <property type="resolution" value="1.30 A"/>
    <property type="chains" value="A=23-605"/>
</dbReference>
<dbReference type="PDB" id="5NIT">
    <property type="method" value="X-ray"/>
    <property type="resolution" value="1.87 A"/>
    <property type="chains" value="A=25-605"/>
</dbReference>
<dbReference type="PDB" id="5NIW">
    <property type="method" value="X-ray"/>
    <property type="resolution" value="1.80 A"/>
    <property type="chains" value="A=25-605"/>
</dbReference>
<dbReference type="PDBsum" id="1CF3"/>
<dbReference type="PDBsum" id="1GAL"/>
<dbReference type="PDBsum" id="3QVP"/>
<dbReference type="PDBsum" id="3QVR"/>
<dbReference type="PDBsum" id="5NIT"/>
<dbReference type="PDBsum" id="5NIW"/>
<dbReference type="PCDDB" id="P13006"/>
<dbReference type="SMR" id="P13006"/>
<dbReference type="CAZy" id="AA3">
    <property type="family name" value="Auxiliary Activities 3"/>
</dbReference>
<dbReference type="GlyCosmos" id="P13006">
    <property type="glycosylation" value="1 site, No reported glycans"/>
</dbReference>
<dbReference type="PaxDb" id="5061-CADANGAP00001413"/>
<dbReference type="ABCD" id="P13006">
    <property type="antibodies" value="1 sequenced antibody"/>
</dbReference>
<dbReference type="VEuPathDB" id="FungiDB:An01g14740"/>
<dbReference type="VEuPathDB" id="FungiDB:ASPNIDRAFT2_1132679"/>
<dbReference type="VEuPathDB" id="FungiDB:ATCC64974_11640"/>
<dbReference type="VEuPathDB" id="FungiDB:M747DRAFT_316207"/>
<dbReference type="eggNOG" id="KOG1238">
    <property type="taxonomic scope" value="Eukaryota"/>
</dbReference>
<dbReference type="OrthoDB" id="269227at2759"/>
<dbReference type="BioCyc" id="MetaCyc:MONOMER-17584"/>
<dbReference type="BRENDA" id="1.1.3.4">
    <property type="organism ID" value="518"/>
</dbReference>
<dbReference type="SABIO-RK" id="P13006"/>
<dbReference type="EvolutionaryTrace" id="P13006"/>
<dbReference type="GO" id="GO:0005737">
    <property type="term" value="C:cytoplasm"/>
    <property type="evidence" value="ECO:0007669"/>
    <property type="project" value="UniProtKB-SubCell"/>
</dbReference>
<dbReference type="GO" id="GO:0005576">
    <property type="term" value="C:extracellular region"/>
    <property type="evidence" value="ECO:0007669"/>
    <property type="project" value="UniProtKB-SubCell"/>
</dbReference>
<dbReference type="GO" id="GO:0046562">
    <property type="term" value="F:beta-D-glucose oxidase activity"/>
    <property type="evidence" value="ECO:0007669"/>
    <property type="project" value="UniProtKB-EC"/>
</dbReference>
<dbReference type="GO" id="GO:0050660">
    <property type="term" value="F:flavin adenine dinucleotide binding"/>
    <property type="evidence" value="ECO:0007669"/>
    <property type="project" value="InterPro"/>
</dbReference>
<dbReference type="GO" id="GO:0044550">
    <property type="term" value="P:secondary metabolite biosynthetic process"/>
    <property type="evidence" value="ECO:0007669"/>
    <property type="project" value="UniProtKB-ARBA"/>
</dbReference>
<dbReference type="Gene3D" id="3.50.50.60">
    <property type="entry name" value="FAD/NAD(P)-binding domain"/>
    <property type="match status" value="1"/>
</dbReference>
<dbReference type="Gene3D" id="4.10.450.10">
    <property type="entry name" value="Glucose Oxidase, domain 2"/>
    <property type="match status" value="1"/>
</dbReference>
<dbReference type="Gene3D" id="3.30.560.10">
    <property type="entry name" value="Glucose Oxidase, domain 3"/>
    <property type="match status" value="1"/>
</dbReference>
<dbReference type="InterPro" id="IPR036188">
    <property type="entry name" value="FAD/NAD-bd_sf"/>
</dbReference>
<dbReference type="InterPro" id="IPR027424">
    <property type="entry name" value="Glucose_Oxidase_domain_2"/>
</dbReference>
<dbReference type="InterPro" id="IPR012132">
    <property type="entry name" value="GMC_OxRdtase"/>
</dbReference>
<dbReference type="InterPro" id="IPR000172">
    <property type="entry name" value="GMC_OxRdtase_N"/>
</dbReference>
<dbReference type="InterPro" id="IPR007867">
    <property type="entry name" value="GMC_OxRtase_C"/>
</dbReference>
<dbReference type="PANTHER" id="PTHR11552">
    <property type="entry name" value="GLUCOSE-METHANOL-CHOLINE GMC OXIDOREDUCTASE"/>
    <property type="match status" value="1"/>
</dbReference>
<dbReference type="PANTHER" id="PTHR11552:SF201">
    <property type="entry name" value="GLUCOSE-METHANOL-CHOLINE OXIDOREDUCTASE N-TERMINAL DOMAIN-CONTAINING PROTEIN"/>
    <property type="match status" value="1"/>
</dbReference>
<dbReference type="Pfam" id="PF05199">
    <property type="entry name" value="GMC_oxred_C"/>
    <property type="match status" value="1"/>
</dbReference>
<dbReference type="Pfam" id="PF00732">
    <property type="entry name" value="GMC_oxred_N"/>
    <property type="match status" value="1"/>
</dbReference>
<dbReference type="PIRSF" id="PIRSF000137">
    <property type="entry name" value="Alcohol_oxidase"/>
    <property type="match status" value="1"/>
</dbReference>
<dbReference type="SUPFAM" id="SSF54373">
    <property type="entry name" value="FAD-linked reductases, C-terminal domain"/>
    <property type="match status" value="1"/>
</dbReference>
<dbReference type="SUPFAM" id="SSF51905">
    <property type="entry name" value="FAD/NAD(P)-binding domain"/>
    <property type="match status" value="1"/>
</dbReference>
<dbReference type="PROSITE" id="PS00623">
    <property type="entry name" value="GMC_OXRED_1"/>
    <property type="match status" value="1"/>
</dbReference>
<dbReference type="PROSITE" id="PS00624">
    <property type="entry name" value="GMC_OXRED_2"/>
    <property type="match status" value="1"/>
</dbReference>
<gene>
    <name evidence="43" type="primary">gox</name>
</gene>
<accession>P13006</accession>
<keyword id="KW-0002">3D-structure</keyword>
<keyword id="KW-0134">Cell wall</keyword>
<keyword id="KW-0963">Cytoplasm</keyword>
<keyword id="KW-0903">Direct protein sequencing</keyword>
<keyword id="KW-1015">Disulfide bond</keyword>
<keyword id="KW-0272">Extracellular matrix</keyword>
<keyword id="KW-0274">FAD</keyword>
<keyword id="KW-0285">Flavoprotein</keyword>
<keyword id="KW-0325">Glycoprotein</keyword>
<keyword id="KW-0560">Oxidoreductase</keyword>
<keyword id="KW-0964">Secreted</keyword>
<keyword id="KW-0732">Signal</keyword>
<name>GOX_ASPNG</name>
<protein>
    <recommendedName>
        <fullName evidence="47">Glucose oxidase</fullName>
        <shortName evidence="42">GOD</shortName>
        <shortName evidence="43">GOx</shortName>
        <ecNumber evidence="9 10 11 19 20 24">1.1.3.4</ecNumber>
    </recommendedName>
    <alternativeName>
        <fullName evidence="42">Beta-D-glucose:oxygen 1-oxido-reductase</fullName>
    </alternativeName>
</protein>
<reference key="1">
    <citation type="journal article" date="1989" name="FEBS Lett.">
        <title>Cloning and DNA sequence analysis of the glucose oxidase gene from Aspergillus niger NRRL-3.</title>
        <authorList>
            <person name="Kriechbaum M."/>
            <person name="Heilmann H.J."/>
            <person name="Wientjes F.J."/>
            <person name="Hahn M."/>
            <person name="Jany K.-D."/>
            <person name="Gassen H.G."/>
            <person name="Sharif F."/>
            <person name="Alaeddinoglu G."/>
        </authorList>
    </citation>
    <scope>NUCLEOTIDE SEQUENCE [GENOMIC DNA]</scope>
    <scope>PARTIAL PROTEIN SEQUENCE</scope>
    <source>
        <strain>ATCC 9029 / NRRL 3 / CBS 120.49 / DSM 2466 / N400 / FGSC 732</strain>
    </source>
</reference>
<reference key="2">
    <citation type="journal article" date="1990" name="J. Biol. Chem.">
        <title>Glucose oxidase from Aspergillus niger. Cloning, gene sequence, secretion from Saccharomyces cerevisiae and kinetic analysis of a yeast-derived enzyme.</title>
        <authorList>
            <person name="Frederick K.R."/>
            <person name="Tung J."/>
            <person name="Emerick R.S."/>
            <person name="Masiarz F.R."/>
            <person name="Chamberlain S.H."/>
            <person name="Vasavada A."/>
            <person name="Rosenberg S."/>
            <person name="Chakraborty S."/>
            <person name="Schopter L.M."/>
            <person name="Massey V."/>
        </authorList>
    </citation>
    <scope>NUCLEOTIDE SEQUENCE [MRNA]</scope>
    <scope>FUNCTION</scope>
    <scope>GLYCOSYLATION</scope>
    <scope>COFACTOR</scope>
    <scope>CATALYTIC ACTIVITY</scope>
    <scope>BIOPHYSICOCHEMICAL PROPERTIES</scope>
</reference>
<reference key="3">
    <citation type="journal article" date="1990" name="Curr. Genet.">
        <title>Expression of the Aspergillus niger glucose oxidase gene in A. niger, A. nidulans and Saccharomyces cerevisiae.</title>
        <authorList>
            <person name="Whittington H."/>
            <person name="Kerry-Williams S."/>
            <person name="Bidgood K."/>
            <person name="Dodsworth N."/>
            <person name="Peberdy J."/>
            <person name="Dobson M."/>
            <person name="Hinchliffe E."/>
            <person name="Ballance D.J."/>
        </authorList>
    </citation>
    <scope>NUCLEOTIDE SEQUENCE OF 1-32</scope>
    <scope>FUNCTION</scope>
    <scope>CATALYTIC ACTIVITY</scope>
</reference>
<reference key="4">
    <citation type="journal article" date="1928" name="Biochem. Z.">
        <title>Studies on the new enzyme glucoseoxidase. I.</title>
        <authorList>
            <person name="Muller D."/>
        </authorList>
    </citation>
    <scope>IDENTIFICATION</scope>
    <scope>FUNCTION</scope>
    <scope>CATALYTIC ACTIVITY</scope>
</reference>
<reference key="5">
    <citation type="journal article" date="1929" name="Biochem. Z.">
        <title>Studies on the new enzyme glucoseoxidase. II.</title>
        <authorList>
            <person name="Muller D."/>
        </authorList>
    </citation>
    <scope>FUNCTION</scope>
    <scope>CATALYTIC ACTIVITY</scope>
    <scope>SUBSTRATE SPECIFICITY</scope>
    <scope>BIOPHYSICOCHEMICAL PROPERTIES</scope>
</reference>
<reference key="6">
    <citation type="journal article" date="1964" name="Biochemistry">
        <title>The oxidation of glucose and related compounds by glucose oxidase from Aspergillus niger.</title>
        <authorList>
            <person name="Pazur J.H."/>
            <person name="Kleppe K."/>
        </authorList>
    </citation>
    <scope>FUNCTION</scope>
    <scope>CATALYTIC ACTIVITY</scope>
    <scope>BIOPHYSICOCHEMICAL PROPERTIES</scope>
    <scope>COFACTOR</scope>
</reference>
<reference key="7">
    <citation type="journal article" date="1964" name="J. Biol. Chem.">
        <title>Kinetics and mechanism of action of glucose oxidase.</title>
        <authorList>
            <person name="Gibson Q.H."/>
            <person name="Swoboda B.E.P."/>
            <person name="Massey V."/>
        </authorList>
    </citation>
    <scope>FUNCTION</scope>
    <scope>CATALYTIC ACTIVITY</scope>
    <scope>BIOPHYSICOCHEMICAL PROPERTIES</scope>
    <scope>COFACTOR</scope>
</reference>
<reference key="8">
    <citation type="journal article" date="1965" name="J. Biol. Chem.">
        <title>Purification and properties of the glucose oxidase from Aspergillus niger.</title>
        <authorList>
            <person name="Swoboda B.E.P."/>
            <person name="Massey V."/>
        </authorList>
    </citation>
    <scope>FUNCTION</scope>
    <scope>CATALYTIC ACTIVITY</scope>
</reference>
<reference key="9">
    <citation type="journal article" date="1968" name="J. Biochem.">
        <title>Action mechanism of glucose oxidase of Aspergillus niger.</title>
        <authorList>
            <person name="Nakamura S."/>
            <person name="Ogura Y."/>
        </authorList>
    </citation>
    <scope>CATALYTIC ACTIVITY</scope>
</reference>
<reference key="10">
    <citation type="journal article" date="1975" name="J. Biochem.">
        <title>Purification, properties, and molecular features of glucose oxidase from Aspergillus niger.</title>
        <authorList>
            <person name="Tsuge H."/>
            <person name="Natsuaki O."/>
            <person name="Ohashi K."/>
        </authorList>
    </citation>
    <scope>SUBUNIT</scope>
    <scope>COFACTOR</scope>
</reference>
<reference key="11">
    <citation type="journal article" date="1989" name="Biochem. Cell Biol.">
        <title>Effect of deglycosylation of N-linked sugar chains on glucose oxidase from Aspergillus niger.</title>
        <authorList>
            <person name="Takegawa K."/>
            <person name="Fujiwara K."/>
            <person name="Iwahara S."/>
            <person name="Yamamoto K."/>
            <person name="Tochikura T."/>
        </authorList>
    </citation>
    <scope>GLYCOSYLATION</scope>
</reference>
<reference key="12">
    <citation type="journal article" date="1994" name="Biosens. Bioelectron.">
        <title>Monitoring the activity of glucose oxidase during the cultivation of Aspergillus niger using novel amperometric sensor with 1, 1'-dimethylferricinium as a mediator.</title>
        <authorList>
            <person name="Luong J.H."/>
            <person name="Masson C."/>
            <person name="Brown R.S."/>
            <person name="Male K.B."/>
            <person name="Nguyen A.L."/>
        </authorList>
    </citation>
    <scope>FUNCTION</scope>
    <scope>CATALYTIC ACTIVITY</scope>
</reference>
<reference key="13">
    <citation type="journal article" date="1995" name="J. Food Prot.">
        <title>Antibacterial Activity of the Glucose Oxidase/Glucose System in Liquid Whole Egg.</title>
        <authorList>
            <person name="Dobbenie D."/>
            <person name="Uyttendaele M."/>
            <person name="Debevere J."/>
        </authorList>
    </citation>
    <scope>BIOTECHNOLOGY</scope>
</reference>
<reference key="14">
    <citation type="journal article" date="1999" name="Biochem. Biophys. Res. Commun.">
        <title>The fluorescence emission of the apo-glucose oxidase from Aspergillus niger as probe to estimate glucose concentrations.</title>
        <authorList>
            <person name="D'Auria S."/>
            <person name="Herman P."/>
            <person name="Rossi M."/>
            <person name="Lakowicz J.R."/>
        </authorList>
    </citation>
    <scope>BIOTECHNOLOGY</scope>
</reference>
<reference key="15">
    <citation type="journal article" date="1997" name="Clin. Chim. Acta">
        <title>Evaluation of a miniaturized thermal biosensor for the determination of glucose in whole blood.</title>
        <authorList>
            <person name="Harborn U."/>
            <person name="Xie B."/>
            <person name="Venkatesh R."/>
            <person name="Danielsson B."/>
        </authorList>
    </citation>
    <scope>BIOTECHNOLOGY</scope>
</reference>
<reference key="16">
    <citation type="journal article" date="2001" name="Bioresour. Technol.">
        <title>Production of glucose oxidase using Aspergillus niger and corn steep liquor.</title>
        <authorList>
            <person name="Kona R.P."/>
            <person name="Qureshi N."/>
            <person name="Pai J.S."/>
        </authorList>
    </citation>
    <scope>BIOTECHNOLOGY</scope>
</reference>
<reference key="17">
    <citation type="journal article" date="2002" name="J. Biotechnol.">
        <title>Hydrogen peroxide generation with immobilized glucose oxidase for textile bleaching.</title>
        <authorList>
            <person name="Tzanov T."/>
            <person name="Costa S.A."/>
            <person name="Guebitz G.M."/>
            <person name="Cavaco-Paulo A."/>
        </authorList>
    </citation>
    <scope>BIOTECHNOLOGY</scope>
</reference>
<reference key="18">
    <citation type="journal article" date="2003" name="Appl. Microbiol. Biotechnol.">
        <title>Expression of the Aspergillus niger glucose oxidase gene in Saccharomyces cerevisiae and its potential applications in wine production.</title>
        <authorList>
            <person name="Malherbe D.F."/>
            <person name="du Toit M."/>
            <person name="Cordero Otero R.R."/>
            <person name="van Rensburg P."/>
            <person name="Pretorius I.S."/>
        </authorList>
    </citation>
    <scope>BIOTECHNOLOGY</scope>
</reference>
<reference key="19">
    <citation type="journal article" date="2004" name="Anal. Bioanal. Chem.">
        <title>Glucose oxidase-magnetite nanoparticle bioconjugate for glucose sensing.</title>
        <authorList>
            <person name="Rossi L.M."/>
            <person name="Quach A.D."/>
            <person name="Rosenzweig Z."/>
        </authorList>
    </citation>
    <scope>BIOTECHNOLOGY</scope>
</reference>
<reference key="20">
    <citation type="journal article" date="2004" name="Anal. Biochem.">
        <title>Assay for glucose oxidase from Aspergillus niger and Penicillium amagasakiense by Fourier transform infrared spectroscopy.</title>
        <authorList>
            <person name="Karmali K."/>
            <person name="Karmali A."/>
            <person name="Teixeira A."/>
            <person name="Curto M.J."/>
        </authorList>
    </citation>
    <scope>FUNCTION</scope>
    <scope>CATALYTIC ACTIVITY</scope>
</reference>
<reference key="21">
    <citation type="journal article" date="2006" name="Appl. Microbiol. Biotechnol.">
        <title>Location of glucose oxidase during production by Aspergillus niger.</title>
        <authorList>
            <person name="Clarke K.G."/>
            <person name="Johnstone-Robertson M."/>
            <person name="Price B."/>
            <person name="Harrison S.T."/>
        </authorList>
    </citation>
    <scope>SUBCELLULAR LOCATION</scope>
</reference>
<reference key="22">
    <citation type="journal article" date="2006" name="Biotechnol. Prog.">
        <title>Expression of an Aspergillus niger glucose oxidase in saccharomyces cerevisiae and its use to optimize fructo-oligosaccharides synthesis.</title>
        <authorList>
            <person name="Valdivieso-Ugarte M."/>
            <person name="Ronchel C."/>
            <person name="Banuelos O."/>
            <person name="Velasco J."/>
            <person name="Adrio J.L."/>
        </authorList>
    </citation>
    <scope>BIOTECHNOLOGY</scope>
</reference>
<reference key="23">
    <citation type="journal article" date="2008" name="Biotechnol. Bioeng.">
        <title>Characterization of the distribution of glucose oxidase in Penicillium sp. CBS 120262 and Aspergillus niger NRRL-3 cultures and its effect on integrated product recovery.</title>
        <authorList>
            <person name="Johnstone-Robertson M."/>
            <person name="Clarke K.G."/>
            <person name="Harrison S.T."/>
        </authorList>
    </citation>
    <scope>SUBCELLULAR LOCATION</scope>
</reference>
<reference key="24">
    <citation type="journal article" date="2014" name="Lett. Appl. Microbiol.">
        <title>Production and characterization of recombinant glucose oxidase from Aspergillus niger expressed in Pichia pastoris.</title>
        <authorList>
            <person name="Meng Y."/>
            <person name="Zhao M."/>
            <person name="Yang M."/>
            <person name="Zhang Q."/>
            <person name="Hao J."/>
            <person name="Meng Y."/>
        </authorList>
    </citation>
    <scope>FUNCTION</scope>
    <scope>CATALYTIC ACTIVITY</scope>
    <scope>SUBSTRATE SPECIFICITY</scope>
    <scope>BIOPHYSICOCHEMICAL PROPERTIES</scope>
</reference>
<reference key="25">
    <citation type="journal article" date="2015" name="Biosens. Bioelectron.">
        <title>Biosensor based on glucose oxidase-nanoporous gold co-catalysis for glucose detection.</title>
        <authorList>
            <person name="Wu C."/>
            <person name="Sun H."/>
            <person name="Li Y."/>
            <person name="Liu X."/>
            <person name="Du X."/>
            <person name="Wang X."/>
            <person name="Xu P."/>
        </authorList>
    </citation>
    <scope>BIOTECHNOLOGY</scope>
</reference>
<reference key="26">
    <citation type="journal article" date="2015" name="PLoS ONE">
        <title>Identification and structural analysis of amino acid substitutions that increase the stability and activity of Aspergillus niger glucose oxidase.</title>
        <authorList>
            <person name="Marin-Navarro J."/>
            <person name="Roupain N."/>
            <person name="Talens-Perales D."/>
            <person name="Polaina J."/>
        </authorList>
    </citation>
    <scope>MUTAGENESIS OF GLN-112; GLN-164; TYR-531; THR-576 AND LEU-591</scope>
</reference>
<reference key="27">
    <citation type="journal article" date="2017" name="Faraday Discuss.">
        <title>A study of biocatalysts based on glucose oxidase.</title>
        <authorList>
            <person name="Golikova E.P."/>
            <person name="Lakina N.V."/>
            <person name="Grebennikova O.V."/>
            <person name="Matveeva V.G."/>
            <person name="Sulman E.M."/>
        </authorList>
    </citation>
    <scope>BIOTECHNOLOGY</scope>
</reference>
<reference key="28">
    <citation type="journal article" date="2017" name="Front. Microbiol.">
        <title>Improvement Strategies, Cost Effective Production, and Potential Applications of Fungal Glucose Oxidase (GOD): Current Updates.</title>
        <authorList>
            <person name="Dubey M.K."/>
            <person name="Zehra A."/>
            <person name="Aamir M."/>
            <person name="Meena M."/>
            <person name="Ahirwal L."/>
            <person name="Singh S."/>
            <person name="Shukla S."/>
            <person name="Upadhyay R.S."/>
            <person name="Bueno-Mari R."/>
            <person name="Bajpai V.K."/>
        </authorList>
    </citation>
    <scope>REVIEW ON BIOTECHNOLOGY</scope>
</reference>
<reference key="29">
    <citation type="journal article" date="2017" name="Mol. Biotechnol.">
        <title>Expression and characterization of glucose oxidase from Aspergillus niger in Yarrowia lipolytica.</title>
        <authorList>
            <person name="Khadivi Derakshan F."/>
            <person name="Darvishi F."/>
            <person name="Dezfulian M."/>
            <person name="Madzak C."/>
        </authorList>
    </citation>
    <scope>FUNCTION</scope>
    <scope>CATALYTIC ACTIVITY</scope>
    <scope>SUBSTRATE SPECIFICITY</scope>
    <scope>BIOPHYSICOCHEMICAL PROPERTIES</scope>
</reference>
<reference key="30">
    <citation type="journal article" date="2018" name="Biomaterials">
        <title>Glucose &amp; oxygen exhausting liposomes for combined cancer starvation and hypoxia-activated therapy.</title>
        <authorList>
            <person name="Zhang R."/>
            <person name="Feng L."/>
            <person name="Dong Z."/>
            <person name="Wang L."/>
            <person name="Liang C."/>
            <person name="Chen J."/>
            <person name="Ma Q."/>
            <person name="Zhang R."/>
            <person name="Chen Q."/>
            <person name="Wang Y."/>
            <person name="Liu Z."/>
        </authorList>
    </citation>
    <scope>BIOTECHNOLOGY</scope>
</reference>
<reference key="31">
    <citation type="journal article" date="2018" name="Biotechnol. Lett.">
        <title>High-content screening of Aspergillus niger with both increased production and high secretion rate of glucose oxidase.</title>
        <authorList>
            <person name="Zhu X."/>
            <person name="Sun J."/>
            <person name="Chu J."/>
        </authorList>
    </citation>
    <scope>FUNCTION</scope>
    <scope>CATALYTIC ACTIVITY</scope>
    <scope>SUBCELLULAR LOCATION</scope>
</reference>
<reference key="32">
    <citation type="journal article" date="2018" name="Int. J. Biol. Macromol.">
        <title>Co-immobilization of glucose oxidase and catalase in silica inverse opals for glucose removal from commercial isomaltooligosaccharide.</title>
        <authorList>
            <person name="Zhao B."/>
            <person name="Zhou L."/>
            <person name="Ma L."/>
            <person name="He Y."/>
            <person name="Gao J."/>
            <person name="Li D."/>
            <person name="Jiang Y."/>
        </authorList>
    </citation>
    <scope>BIOTECHNOLOGY</scope>
</reference>
<reference key="33">
    <citation type="journal article" date="2019" name="Int. J. Biol. Macromol.">
        <title>Thermostability improvement of the glucose oxidase from Aspergillus niger for efficient gluconic acid production via computational design.</title>
        <authorList>
            <person name="Mu Q."/>
            <person name="Cui Y."/>
            <person name="Tian Y."/>
            <person name="Hu M."/>
            <person name="Tao Y."/>
            <person name="Wu B."/>
        </authorList>
    </citation>
    <scope>BIOTECHNOLOGY</scope>
    <scope>FUNCTION</scope>
    <scope>ACTIVITY</scope>
    <scope>MUTAGENESIS OF THR-32; ALA-58; ASN-157; ARG-167; GLY-296; THR-298; ALA-314; LEU-334; ARG-357; SER-362; HIS-388; GLU-389; GLU-396; VAL-442; SER-444 AND ASP-473</scope>
</reference>
<reference key="34">
    <citation type="journal article" date="2021" name="Anal. Chem.">
        <title>Detlev Mueller's Discovery of Glucose Oxidase in 1925.</title>
        <authorList>
            <person name="Heller A."/>
            <person name="Ulstrup J."/>
        </authorList>
    </citation>
    <scope>DISCOVERY</scope>
</reference>
<reference key="35">
    <citation type="journal article" date="2021" name="Food Chem.">
        <title>Gluconic acid as a chelator to improve clarity of skim milk powder dispersions at pH 3.0.</title>
        <authorList>
            <person name="Choi I."/>
            <person name="Zhong Q."/>
        </authorList>
    </citation>
    <scope>BIOTECHNOLOGY</scope>
</reference>
<reference key="36">
    <citation type="journal article" date="2022" name="Biomolecules">
        <title>Glucose oxidase, an enzyme 'Ferrari': its structure, function, production and properties in the light of various industrial and biotechnological applications.</title>
        <authorList>
            <person name="Bauer J.A."/>
            <person name="Zamocka M."/>
            <person name="Majtan J."/>
            <person name="Bauerova-Hlinkova V."/>
        </authorList>
    </citation>
    <scope>REVIEW ON BIOTECHNOLOGY</scope>
</reference>
<reference key="37">
    <citation type="journal article" date="2022" name="Food Chem.">
        <title>Piezoelectric sensing of glucose oxidase activity of Aspergillus niger spores pretreated by different methods.</title>
        <authorList>
            <person name="Zhong P."/>
            <person name="Zheng L."/>
            <person name="Yang Y."/>
            <person name="Zhou Y."/>
            <person name="Liu X."/>
            <person name="Yang Q."/>
            <person name="Ren J."/>
        </authorList>
    </citation>
    <scope>FUNCTION</scope>
    <scope>CATALYTIC ACTIVITY</scope>
</reference>
<reference key="38">
    <citation type="journal article" date="2023" name="Electrophoresis">
        <title>Catalytic activity of glucose oxidase after dielectrophoretic immobilization on nanoelectrodes.</title>
        <authorList>
            <person name="Pruefer M."/>
            <person name="Stanke S."/>
            <person name="Bier F.F."/>
            <person name="Hoelzel R."/>
        </authorList>
    </citation>
    <scope>CATALYTIC ACTIVITY</scope>
</reference>
<reference key="39">
    <citation type="journal article" date="2023" name="J. Food Sci.">
        <title>Effect of gluconic acid rinsing on cadmium decontamination from rice protein.</title>
        <authorList>
            <person name="Shen D."/>
            <person name="Song G."/>
            <person name="Sun X."/>
            <person name="Fan F."/>
            <person name="Ding J."/>
            <person name="Fang Y."/>
            <person name="Li P."/>
        </authorList>
    </citation>
    <scope>BIOTECHNOLOGY</scope>
</reference>
<reference evidence="50" key="40">
    <citation type="journal article" date="1993" name="J. Mol. Biol.">
        <title>Crystal structure of glucose oxidase from Aspergillus niger refined at 2.3 A resolution.</title>
        <authorList>
            <person name="Hecht H.J."/>
            <person name="Kalisz H.M."/>
            <person name="Hendle J."/>
            <person name="Schmid R.D."/>
            <person name="Schomburg D."/>
        </authorList>
    </citation>
    <scope>X-RAY CRYSTALLOGRAPHY (2.30 ANGSTROMS) OF 23-605 IN COMPLEX WITH FAD</scope>
    <scope>GLYCOSYLATION AT ASN-183; ASN-190; ASN-377 AND ASN-410</scope>
    <scope>DISULFIDE BONDS</scope>
    <scope>ACTIVE SITE</scope>
    <scope>SUBUNIT</scope>
    <scope>COFACTOR</scope>
</reference>
<reference evidence="49" key="41">
    <citation type="journal article" date="1999" name="Acta Crystallogr. D">
        <title>1.8 and 1.9 A resolution structures of the Penicillium amagasakiense and Aspergillus niger glucose oxidases as a basis for modelling substrate complexes.</title>
        <authorList>
            <person name="Wohlfahrt G."/>
            <person name="Witt S."/>
            <person name="Hendle J."/>
            <person name="Schomburg D."/>
            <person name="Kalisz H.M."/>
            <person name="Hecht H.J."/>
        </authorList>
    </citation>
    <scope>X-RAY CRYSTALLOGRAPHY (1.90 ANGSTROMS) OF 23-605 IN COMPLEX WITH FAD</scope>
    <scope>COFACTOR</scope>
    <scope>GLYCOSYLATION AT ASN-183; ASN-377 AND ASN-410</scope>
    <scope>DISULFIDE BONDS</scope>
</reference>
<reference evidence="51 52" key="42">
    <citation type="journal article" date="2011" name="Biochemistry">
        <title>Probing oxygen activation sites in two flavoprotein oxidases using chloride as an oxygen surrogate.</title>
        <authorList>
            <person name="Kommoju P.R."/>
            <person name="Chen Z.W."/>
            <person name="Bruckner R.C."/>
            <person name="Mathews F.S."/>
            <person name="Jorns M.S."/>
        </authorList>
    </citation>
    <scope>X-RAY CRYSTALLOGRAPHY (1.20 ANGSTROMS) OF 23-605 IN COMPLEX WITH FAD</scope>
    <scope>COFACTOR</scope>
    <scope>GLYCOSYLATION AT ASN-183; ASN-377 AND ASN-410</scope>
    <scope>DISULFIDE BONDS</scope>
</reference>
<reference evidence="53 54" key="43">
    <citation type="journal article" date="2017" name="ACS Catal.">
        <title>Shuffling Active Site Substate Populations Affects Catalytic Activity: The Case of Glucose Oxidase.</title>
        <authorList>
            <person name="Petrovic D."/>
            <person name="Frank D."/>
            <person name="Kamerlin S.C.L."/>
            <person name="Hoffmann K."/>
            <person name="Strodel B."/>
        </authorList>
    </citation>
    <scope>X-RAY CRYSTALLOGRAPHY (1.80 ANGSTROMS) OF 25-605 IN COMPLEX WITH FAD</scope>
    <scope>COFACTOR</scope>
    <scope>GLYCOSYLATION AT ASN-183; ASN-280; ASN-377; ASN-410 AND ASN-495</scope>
    <scope>ACTIVE SITE</scope>
    <scope>CATALYTIC ACTIVITY</scope>
    <scope>BIOPHYSICOCHEMICAL PROPERTIES</scope>
    <scope>DISULFIDE BONDS</scope>
</reference>
<comment type="function">
    <text evidence="9 10 11 13 17 19 20 24 26 33 37 40 41">Glucose oxidase catalyzes the oxidation of beta-D-glucose to D-glucono-delta-lactone and hydrogen peroxide in the presence of molecular oxygen. D-glucono-delta-lactone is sequentially hydrolyzed by lactonase to D-gluconic acid, and the resulting hydrogen peroxide is hydrolyzed by catalase to oxygen and water (PubMed:14188176, PubMed:14257628, PubMed:14299649, PubMed:15450808, PubMed:2076553, PubMed:2406261, PubMed:24283586, PubMed:28631058, PubMed:28939970, PubMed:34500289, PubMed:7826581, Ref.4, Ref.5). The activity shows high specificity to beta-D-glucose, with very low to no activity towards L-glucose, 2-deoxy-D-glucose, 3-deoxy-D-glucose, 4-deoxy-D-glucose, 5-deoxy-D-glucose, 6-deoxy-D-glucose, 3-O-methyl-D-glucose, 4-O-methyl-D-glucose, 6-O-methyl-D-glucose, 4,6-O-benzylidene-D-glucose, 5-thio-5-deoxy-D-glucose, D-mannose, D-allose, D-galactose, D-fructose, D-arabinose, D-xylose, trehalose, melibiose, L-mannomethylose, lactose, sucrose or 1,5-anhydro-D-glucitol (PubMed:14188176, PubMed:14257628, PubMed:24283586, Ref.5).</text>
</comment>
<comment type="catalytic activity">
    <reaction evidence="9 10 11 13 19 20 24 26 33 34 36 37">
        <text>beta-D-glucose + O2 = D-glucono-1,5-lactone + H2O2</text>
        <dbReference type="Rhea" id="RHEA:11428"/>
        <dbReference type="ChEBI" id="CHEBI:15379"/>
        <dbReference type="ChEBI" id="CHEBI:15903"/>
        <dbReference type="ChEBI" id="CHEBI:16217"/>
        <dbReference type="ChEBI" id="CHEBI:16240"/>
        <dbReference type="EC" id="1.1.3.4"/>
    </reaction>
    <physiologicalReaction direction="left-to-right" evidence="9 10 11 19 20 24 26 33 34 36 37">
        <dbReference type="Rhea" id="RHEA:11429"/>
    </physiologicalReaction>
</comment>
<comment type="cofactor">
    <cofactor evidence="3 7 9 18 19 28 38">
        <name>FAD</name>
        <dbReference type="ChEBI" id="CHEBI:57692"/>
    </cofactor>
</comment>
<comment type="biophysicochemical properties">
    <kinetics>
        <KM evidence="10 19 20">0.12 M for beta-D-glucose</KM>
        <KM evidence="10">0.025 M for 2-deoxy-D-glucose at 0 degrees Celsius</KM>
        <KM evidence="10">0.04 M for 2-deoxy-D-glucose at 25 degrees Celsius</KM>
        <KM evidence="19">0.26 mM for O(2)</KM>
        <Vmax evidence="20">359.0 umol/min/mg enzyme towards D-glucose</Vmax>
    </kinetics>
    <phDependence>
        <text evidence="9 20 24 41">Optimum pH is 5.5 to 6.0.</text>
    </phDependence>
    <temperatureDependence>
        <text evidence="24">Optimum temperature is 37 degrees Celsius.</text>
    </temperatureDependence>
</comment>
<comment type="subunit">
    <text evidence="7 38">Homodimer.</text>
</comment>
<comment type="subcellular location">
    <subcellularLocation>
        <location evidence="14 16 26">Secreted</location>
    </subcellularLocation>
    <subcellularLocation>
        <location evidence="14 16">Secreted</location>
        <location evidence="14 16">Cell wall</location>
    </subcellularLocation>
    <subcellularLocation>
        <location evidence="14">Cytoplasm</location>
    </subcellularLocation>
    <subcellularLocation>
        <location evidence="14 16">Secreted</location>
        <location evidence="14 16">Extracellular space</location>
        <location evidence="14 16">Extracellular matrix</location>
    </subcellularLocation>
    <text evidence="14 16">The extracellular fluid contains 38% of the total activity with the remaining 62% being associated with the mycelia and distributed between the cell wall, cytoplasm and slime mucilage in the proportions of 34, 12 and 16%, respectively (PubMed:16133329). On progression from mid-exponential to stationary phase, the percentage of activity in the cytoplasm decreased 1.3-fold. Decreasing cytoplasmic activity is accompanied by 1.3-fold increases in the cell envelope and slime mucilage, with a 1.3-fold decrease in the extracellular fluid (PubMed:17787009).</text>
</comment>
<comment type="PTM">
    <text evidence="21">The N-linked sugar chains of the glucose oxidase contributed to the high solubility of the enzyme in water.</text>
</comment>
<comment type="biotechnology">
    <text evidence="4 5 6 8 12 15 22 25 27 29 30 31 32 35 39 44 46">The high specificity, high turnover and high stability of glucose oxidase make it an ideal enzyme for biosensor applications and such as the detection and quantitation of glucose in industrial solutions and body fluids (PubMed:10491329, PubMed:15448967, PubMed:25463642, PubMed:9469255). Glucose oxidase is used in the food industry for removal of residual glucose, e.g., desugaring of dried egg products, and as an antioxidant in the production of beer and soft drinks (PubMed:11333029, PubMed:12764565, PubMed:16889385, PubMed:29051100, PubMed:31137288, PubMed:31202848). In medicine, by consuming glucose, glucose oxidase could reduce the available metabolic energy sources of cancer cells, thereby, inhibiting their proliferation, and by consuming oxygen and producing gluconic acid, it could increase the hypoxia and acidity of the tumor microenvironment (PubMed:29438880, PubMed:35327664). Moreover, gluconic acid and its derivative salts can be used in a wide range of industries including textile dying, metal surface cleaning, food additives, detergents, concrete, cosmetics and pharmaceutical (PubMed:11690697, PubMed:28659876, PubMed:28660924, PubMed:33229152, PubMed:37326347).</text>
</comment>
<comment type="miscellaneous">
    <text evidence="45">Glucose oxidase was discovered by 26 years old Danish botanist Detlev Mueller in 1925. Detlev Mueller, at the then Royal Danish Veterinary and Agricultural University (KVL), published a brief note in a somewhat inaccessible journal reporting his discovery of a new enzyme, glucose oxidase (A new enzyme, glucose oxidase, from Aspergillus niger. Kgl. Veterinaer. og Landbohojskole Aarsskrift (Copenhagen) 1925, 329-331) (PubMed:33904729). Aspergillus niger glucose oxidase was the first flavoenzyme to be discovered, however, it was Nobel Prize winner Otto Warburg and Walter Christian, who in 1932-1933 discovered a different enzyme, glucose 6-phosphate dehydrogenase, in baker's yeast Saccharomyces cerevisiae, that did recognize the significance of their enzyme's yellow cofactor (PubMed:33904729).</text>
</comment>
<comment type="similarity">
    <text evidence="48">Belongs to the GMC oxidoreductase family.</text>
</comment>
<comment type="online information" name="Worthington enzyme manual">
    <link uri="https://www.worthington-biochem.com/GOP/"/>
</comment>
<evidence type="ECO:0000255" key="1"/>
<evidence type="ECO:0000255" key="2">
    <source>
        <dbReference type="PROSITE-ProRule" id="PRU00498"/>
    </source>
</evidence>
<evidence type="ECO:0000269" key="3">
    <source>
    </source>
</evidence>
<evidence type="ECO:0000269" key="4">
    <source>
    </source>
</evidence>
<evidence type="ECO:0000269" key="5">
    <source>
    </source>
</evidence>
<evidence type="ECO:0000269" key="6">
    <source>
    </source>
</evidence>
<evidence type="ECO:0000269" key="7">
    <source>
    </source>
</evidence>
<evidence type="ECO:0000269" key="8">
    <source>
    </source>
</evidence>
<evidence type="ECO:0000269" key="9">
    <source>
    </source>
</evidence>
<evidence type="ECO:0000269" key="10">
    <source>
    </source>
</evidence>
<evidence type="ECO:0000269" key="11">
    <source>
    </source>
</evidence>
<evidence type="ECO:0000269" key="12">
    <source>
    </source>
</evidence>
<evidence type="ECO:0000269" key="13">
    <source>
    </source>
</evidence>
<evidence type="ECO:0000269" key="14">
    <source>
    </source>
</evidence>
<evidence type="ECO:0000269" key="15">
    <source>
    </source>
</evidence>
<evidence type="ECO:0000269" key="16">
    <source>
    </source>
</evidence>
<evidence type="ECO:0000269" key="17">
    <source>
    </source>
</evidence>
<evidence type="ECO:0000269" key="18">
    <source>
    </source>
</evidence>
<evidence type="ECO:0000269" key="19">
    <source>
    </source>
</evidence>
<evidence type="ECO:0000269" key="20">
    <source>
    </source>
</evidence>
<evidence type="ECO:0000269" key="21">
    <source>
    </source>
</evidence>
<evidence type="ECO:0000269" key="22">
    <source>
    </source>
</evidence>
<evidence type="ECO:0000269" key="23">
    <source>
    </source>
</evidence>
<evidence type="ECO:0000269" key="24">
    <source>
    </source>
</evidence>
<evidence type="ECO:0000269" key="25">
    <source>
    </source>
</evidence>
<evidence type="ECO:0000269" key="26">
    <source>
    </source>
</evidence>
<evidence type="ECO:0000269" key="27">
    <source>
    </source>
</evidence>
<evidence type="ECO:0000269" key="28">
    <source>
    </source>
</evidence>
<evidence type="ECO:0000269" key="29">
    <source>
    </source>
</evidence>
<evidence type="ECO:0000269" key="30">
    <source>
    </source>
</evidence>
<evidence type="ECO:0000269" key="31">
    <source>
    </source>
</evidence>
<evidence type="ECO:0000269" key="32">
    <source>
    </source>
</evidence>
<evidence type="ECO:0000269" key="33">
    <source>
    </source>
</evidence>
<evidence type="ECO:0000269" key="34">
    <source>
    </source>
</evidence>
<evidence type="ECO:0000269" key="35">
    <source>
    </source>
</evidence>
<evidence type="ECO:0000269" key="36">
    <source>
    </source>
</evidence>
<evidence type="ECO:0000269" key="37">
    <source>
    </source>
</evidence>
<evidence type="ECO:0000269" key="38">
    <source>
    </source>
</evidence>
<evidence type="ECO:0000269" key="39">
    <source>
    </source>
</evidence>
<evidence type="ECO:0000269" key="40">
    <source ref="4"/>
</evidence>
<evidence type="ECO:0000269" key="41">
    <source ref="5"/>
</evidence>
<evidence type="ECO:0000303" key="42">
    <source>
    </source>
</evidence>
<evidence type="ECO:0000303" key="43">
    <source>
    </source>
</evidence>
<evidence type="ECO:0000303" key="44">
    <source>
    </source>
</evidence>
<evidence type="ECO:0000303" key="45">
    <source>
    </source>
</evidence>
<evidence type="ECO:0000303" key="46">
    <source>
    </source>
</evidence>
<evidence type="ECO:0000303" key="47">
    <source ref="4"/>
</evidence>
<evidence type="ECO:0000305" key="48"/>
<evidence type="ECO:0007744" key="49">
    <source>
        <dbReference type="PDB" id="1CF3"/>
    </source>
</evidence>
<evidence type="ECO:0007744" key="50">
    <source>
        <dbReference type="PDB" id="1GAL"/>
    </source>
</evidence>
<evidence type="ECO:0007744" key="51">
    <source>
        <dbReference type="PDB" id="3QVP"/>
    </source>
</evidence>
<evidence type="ECO:0007744" key="52">
    <source>
        <dbReference type="PDB" id="3QVR"/>
    </source>
</evidence>
<evidence type="ECO:0007744" key="53">
    <source>
        <dbReference type="PDB" id="5NIT"/>
    </source>
</evidence>
<evidence type="ECO:0007744" key="54">
    <source>
        <dbReference type="PDB" id="5NIW"/>
    </source>
</evidence>
<evidence type="ECO:0007829" key="55">
    <source>
        <dbReference type="PDB" id="1CF3"/>
    </source>
</evidence>
<evidence type="ECO:0007829" key="56">
    <source>
        <dbReference type="PDB" id="3QVP"/>
    </source>
</evidence>
<evidence type="ECO:0007829" key="57">
    <source>
        <dbReference type="PDB" id="3QVR"/>
    </source>
</evidence>
<sequence length="605" mass="65638">MQTLLVSSLVVSLAAALPHYIRSNGIEASLLTDPKDVSGRTVDYIIAGGGLTGLTTAARLTENPNISVLVIESGSYESDRGPIIEDLNAYGDIFGSSVDHAYETVELATNNQTALIRSGNGLGGSTLVNGGTWTRPHKAQVDSWETVFGNEGWNWDNVAAYSLQAERARAPNAKQIAAGHYFNASCHGVNGTVHAGPRDTGDDYSPIVKALMSAVEDRGVPTKKDFGCGDPHGVSMFPNTLHEDQVRSDAAREWLLPNYQRPNLQVLTGQYVGKVLLSQNGTTPRAVGVEFGTHKGNTHNVYAKHEVLLAAGSAVSPTILEYSGIGMKSILEPLGIDTVVDLPVGLNLQDQTTATVRSRITSAGAGQGQAAWFATFNETFGDYSEKAHELLNTKLEQWAEEAVARGGFHNTTALLIQYENYRDWIVNHNVAYSELFLDTAGVASFDVWDLLPFTRGYVHILDKDPYLHHFAYDPQYFLNELDLLGQAAATQLARNISNSGAMQTYFAGETIPGDNLAYDADLSAWTEYIPYHFRPNYHGVGTCSMMPKEMGGVVDNAARVYGVQGLRVIDGSIPPTQMSSHVMTVFYAMALKISDAILEDYASMQ</sequence>
<proteinExistence type="evidence at protein level"/>